<gene>
    <name evidence="1" type="primary">rpmD</name>
    <name type="ordered locus">A1C_05015</name>
</gene>
<organism>
    <name type="scientific">Rickettsia akari (strain Hartford)</name>
    <dbReference type="NCBI Taxonomy" id="293614"/>
    <lineage>
        <taxon>Bacteria</taxon>
        <taxon>Pseudomonadati</taxon>
        <taxon>Pseudomonadota</taxon>
        <taxon>Alphaproteobacteria</taxon>
        <taxon>Rickettsiales</taxon>
        <taxon>Rickettsiaceae</taxon>
        <taxon>Rickettsieae</taxon>
        <taxon>Rickettsia</taxon>
        <taxon>spotted fever group</taxon>
    </lineage>
</organism>
<protein>
    <recommendedName>
        <fullName evidence="1">Large ribosomal subunit protein uL30</fullName>
    </recommendedName>
    <alternativeName>
        <fullName evidence="2">50S ribosomal protein L30</fullName>
    </alternativeName>
</protein>
<comment type="subunit">
    <text evidence="1">Part of the 50S ribosomal subunit.</text>
</comment>
<comment type="similarity">
    <text evidence="1">Belongs to the universal ribosomal protein uL30 family.</text>
</comment>
<keyword id="KW-0687">Ribonucleoprotein</keyword>
<keyword id="KW-0689">Ribosomal protein</keyword>
<sequence length="63" mass="7147">MNNKINNIKITQVKSAIGHKYDQRLTLIGLGLNKMNKSVILENTNSIKGMVNKVKHLLKIENM</sequence>
<dbReference type="EMBL" id="CP000847">
    <property type="protein sequence ID" value="ABV75257.1"/>
    <property type="molecule type" value="Genomic_DNA"/>
</dbReference>
<dbReference type="RefSeq" id="WP_012149887.1">
    <property type="nucleotide sequence ID" value="NC_009881.1"/>
</dbReference>
<dbReference type="SMR" id="A8GPD2"/>
<dbReference type="STRING" id="293614.A1C_05015"/>
<dbReference type="KEGG" id="rak:A1C_05015"/>
<dbReference type="eggNOG" id="COG1841">
    <property type="taxonomic scope" value="Bacteria"/>
</dbReference>
<dbReference type="HOGENOM" id="CLU_131047_1_5_5"/>
<dbReference type="Proteomes" id="UP000006830">
    <property type="component" value="Chromosome"/>
</dbReference>
<dbReference type="GO" id="GO:0022625">
    <property type="term" value="C:cytosolic large ribosomal subunit"/>
    <property type="evidence" value="ECO:0007669"/>
    <property type="project" value="TreeGrafter"/>
</dbReference>
<dbReference type="GO" id="GO:0003735">
    <property type="term" value="F:structural constituent of ribosome"/>
    <property type="evidence" value="ECO:0007669"/>
    <property type="project" value="InterPro"/>
</dbReference>
<dbReference type="GO" id="GO:0006412">
    <property type="term" value="P:translation"/>
    <property type="evidence" value="ECO:0007669"/>
    <property type="project" value="UniProtKB-UniRule"/>
</dbReference>
<dbReference type="CDD" id="cd01658">
    <property type="entry name" value="Ribosomal_L30"/>
    <property type="match status" value="1"/>
</dbReference>
<dbReference type="Gene3D" id="3.30.1390.20">
    <property type="entry name" value="Ribosomal protein L30, ferredoxin-like fold domain"/>
    <property type="match status" value="1"/>
</dbReference>
<dbReference type="HAMAP" id="MF_01371_B">
    <property type="entry name" value="Ribosomal_uL30_B"/>
    <property type="match status" value="1"/>
</dbReference>
<dbReference type="InterPro" id="IPR036919">
    <property type="entry name" value="Ribo_uL30_ferredoxin-like_sf"/>
</dbReference>
<dbReference type="InterPro" id="IPR005996">
    <property type="entry name" value="Ribosomal_uL30_bac-type"/>
</dbReference>
<dbReference type="InterPro" id="IPR016082">
    <property type="entry name" value="Ribosomal_uL30_ferredoxin-like"/>
</dbReference>
<dbReference type="NCBIfam" id="TIGR01308">
    <property type="entry name" value="rpmD_bact"/>
    <property type="match status" value="1"/>
</dbReference>
<dbReference type="PANTHER" id="PTHR15892:SF2">
    <property type="entry name" value="LARGE RIBOSOMAL SUBUNIT PROTEIN UL30M"/>
    <property type="match status" value="1"/>
</dbReference>
<dbReference type="PANTHER" id="PTHR15892">
    <property type="entry name" value="MITOCHONDRIAL RIBOSOMAL PROTEIN L30"/>
    <property type="match status" value="1"/>
</dbReference>
<dbReference type="Pfam" id="PF00327">
    <property type="entry name" value="Ribosomal_L30"/>
    <property type="match status" value="1"/>
</dbReference>
<dbReference type="PIRSF" id="PIRSF002211">
    <property type="entry name" value="Ribosomal_L30_bac-type"/>
    <property type="match status" value="1"/>
</dbReference>
<dbReference type="SUPFAM" id="SSF55129">
    <property type="entry name" value="Ribosomal protein L30p/L7e"/>
    <property type="match status" value="1"/>
</dbReference>
<proteinExistence type="inferred from homology"/>
<accession>A8GPD2</accession>
<name>RL30_RICAH</name>
<evidence type="ECO:0000255" key="1">
    <source>
        <dbReference type="HAMAP-Rule" id="MF_01371"/>
    </source>
</evidence>
<evidence type="ECO:0000305" key="2"/>
<feature type="chain" id="PRO_1000056100" description="Large ribosomal subunit protein uL30">
    <location>
        <begin position="1"/>
        <end position="63"/>
    </location>
</feature>
<reference key="1">
    <citation type="submission" date="2007-09" db="EMBL/GenBank/DDBJ databases">
        <title>Complete genome sequence of Rickettsia akari.</title>
        <authorList>
            <person name="Madan A."/>
            <person name="Fahey J."/>
            <person name="Helton E."/>
            <person name="Ketteman M."/>
            <person name="Madan A."/>
            <person name="Rodrigues S."/>
            <person name="Sanchez A."/>
            <person name="Whiting M."/>
            <person name="Dasch G."/>
            <person name="Eremeeva M."/>
        </authorList>
    </citation>
    <scope>NUCLEOTIDE SEQUENCE [LARGE SCALE GENOMIC DNA]</scope>
    <source>
        <strain>Hartford</strain>
    </source>
</reference>